<proteinExistence type="inferred from homology"/>
<sequence length="168" mass="18622">MVKDILAPGLRVVFCGINPGLSSANTGFPFAHPANRFWKVIHLAGFSDRQLKPEEAEKLLDFRCGVTKLVDRPTVQATEVKLHELRSGGRNLIDKIEDYQPAALAVLGKQAFEQGFSQRGIAWGKQKIAIGATMVWVLPNPSGLNRIKTEKLVEAYRELDQALIMRGL</sequence>
<dbReference type="EC" id="3.2.2.28" evidence="1"/>
<dbReference type="EMBL" id="CP000886">
    <property type="protein sequence ID" value="ABX69337.1"/>
    <property type="molecule type" value="Genomic_DNA"/>
</dbReference>
<dbReference type="RefSeq" id="WP_000237772.1">
    <property type="nucleotide sequence ID" value="NC_010102.1"/>
</dbReference>
<dbReference type="SMR" id="A9N5Z1"/>
<dbReference type="KEGG" id="spq:SPAB_04008"/>
<dbReference type="PATRIC" id="fig|1016998.12.peg.3779"/>
<dbReference type="HOGENOM" id="CLU_042829_3_1_6"/>
<dbReference type="BioCyc" id="SENT1016998:SPAB_RS16280-MONOMER"/>
<dbReference type="Proteomes" id="UP000008556">
    <property type="component" value="Chromosome"/>
</dbReference>
<dbReference type="GO" id="GO:0005737">
    <property type="term" value="C:cytoplasm"/>
    <property type="evidence" value="ECO:0007669"/>
    <property type="project" value="UniProtKB-SubCell"/>
</dbReference>
<dbReference type="GO" id="GO:0003677">
    <property type="term" value="F:DNA binding"/>
    <property type="evidence" value="ECO:0007669"/>
    <property type="project" value="UniProtKB-KW"/>
</dbReference>
<dbReference type="GO" id="GO:0008263">
    <property type="term" value="F:pyrimidine-specific mismatch base pair DNA N-glycosylase activity"/>
    <property type="evidence" value="ECO:0007669"/>
    <property type="project" value="UniProtKB-UniRule"/>
</dbReference>
<dbReference type="GO" id="GO:0004844">
    <property type="term" value="F:uracil DNA N-glycosylase activity"/>
    <property type="evidence" value="ECO:0007669"/>
    <property type="project" value="TreeGrafter"/>
</dbReference>
<dbReference type="GO" id="GO:0006285">
    <property type="term" value="P:base-excision repair, AP site formation"/>
    <property type="evidence" value="ECO:0007669"/>
    <property type="project" value="UniProtKB-UniRule"/>
</dbReference>
<dbReference type="CDD" id="cd10028">
    <property type="entry name" value="UDG-F2_TDG_MUG"/>
    <property type="match status" value="1"/>
</dbReference>
<dbReference type="Gene3D" id="3.40.470.10">
    <property type="entry name" value="Uracil-DNA glycosylase-like domain"/>
    <property type="match status" value="1"/>
</dbReference>
<dbReference type="HAMAP" id="MF_01956">
    <property type="entry name" value="MUG"/>
    <property type="match status" value="1"/>
</dbReference>
<dbReference type="InterPro" id="IPR015637">
    <property type="entry name" value="MUG/TDG"/>
</dbReference>
<dbReference type="InterPro" id="IPR023502">
    <property type="entry name" value="MUG_bact"/>
</dbReference>
<dbReference type="InterPro" id="IPR005122">
    <property type="entry name" value="Uracil-DNA_glycosylase-like"/>
</dbReference>
<dbReference type="InterPro" id="IPR036895">
    <property type="entry name" value="Uracil-DNA_glycosylase-like_sf"/>
</dbReference>
<dbReference type="NCBIfam" id="NF007570">
    <property type="entry name" value="PRK10201.1"/>
    <property type="match status" value="1"/>
</dbReference>
<dbReference type="PANTHER" id="PTHR12159">
    <property type="entry name" value="G/T AND G/U MISMATCH-SPECIFIC DNA GLYCOSYLASE"/>
    <property type="match status" value="1"/>
</dbReference>
<dbReference type="PANTHER" id="PTHR12159:SF9">
    <property type="entry name" value="G_T MISMATCH-SPECIFIC THYMINE DNA GLYCOSYLASE"/>
    <property type="match status" value="1"/>
</dbReference>
<dbReference type="Pfam" id="PF03167">
    <property type="entry name" value="UDG"/>
    <property type="match status" value="1"/>
</dbReference>
<dbReference type="SUPFAM" id="SSF52141">
    <property type="entry name" value="Uracil-DNA glycosylase-like"/>
    <property type="match status" value="1"/>
</dbReference>
<organism>
    <name type="scientific">Salmonella paratyphi B (strain ATCC BAA-1250 / SPB7)</name>
    <dbReference type="NCBI Taxonomy" id="1016998"/>
    <lineage>
        <taxon>Bacteria</taxon>
        <taxon>Pseudomonadati</taxon>
        <taxon>Pseudomonadota</taxon>
        <taxon>Gammaproteobacteria</taxon>
        <taxon>Enterobacterales</taxon>
        <taxon>Enterobacteriaceae</taxon>
        <taxon>Salmonella</taxon>
    </lineage>
</organism>
<keyword id="KW-0963">Cytoplasm</keyword>
<keyword id="KW-0227">DNA damage</keyword>
<keyword id="KW-0228">DNA excision</keyword>
<keyword id="KW-0234">DNA repair</keyword>
<keyword id="KW-0238">DNA-binding</keyword>
<keyword id="KW-0378">Hydrolase</keyword>
<comment type="function">
    <text evidence="1">Excises ethenocytosine and uracil, which can arise by alkylation or deamination of cytosine, respectively, from the corresponding mispairs with guanine in ds-DNA. It is capable of hydrolyzing the carbon-nitrogen bond between the sugar-phosphate backbone of the DNA and the mispaired base. The complementary strand guanine functions in substrate recognition. Required for DNA damage lesion repair in stationary-phase cells.</text>
</comment>
<comment type="catalytic activity">
    <reaction evidence="1">
        <text>Specifically hydrolyzes mismatched double-stranded DNA and polynucleotides, releasing free uracil.</text>
        <dbReference type="EC" id="3.2.2.28"/>
    </reaction>
</comment>
<comment type="subunit">
    <text evidence="1">Binds DNA as a monomer.</text>
</comment>
<comment type="subcellular location">
    <subcellularLocation>
        <location evidence="1">Cytoplasm</location>
    </subcellularLocation>
</comment>
<comment type="similarity">
    <text evidence="1">Belongs to the uracil-DNA glycosylase (UDG) superfamily. TDG/mug family.</text>
</comment>
<feature type="chain" id="PRO_1000088517" description="G/U mismatch-specific DNA glycosylase">
    <location>
        <begin position="1"/>
        <end position="168"/>
    </location>
</feature>
<name>MUG_SALPB</name>
<evidence type="ECO:0000255" key="1">
    <source>
        <dbReference type="HAMAP-Rule" id="MF_01956"/>
    </source>
</evidence>
<accession>A9N5Z1</accession>
<gene>
    <name evidence="1" type="primary">mug</name>
    <name type="ordered locus">SPAB_04008</name>
</gene>
<protein>
    <recommendedName>
        <fullName evidence="1">G/U mismatch-specific DNA glycosylase</fullName>
        <ecNumber evidence="1">3.2.2.28</ecNumber>
    </recommendedName>
    <alternativeName>
        <fullName evidence="1">Double-strand-specific uracil glycosylase</fullName>
    </alternativeName>
    <alternativeName>
        <fullName evidence="1">Mismatch-specific uracil DNA-glycosylase</fullName>
        <shortName evidence="1">MUG</shortName>
    </alternativeName>
</protein>
<reference key="1">
    <citation type="submission" date="2007-11" db="EMBL/GenBank/DDBJ databases">
        <authorList>
            <consortium name="The Salmonella enterica serovar Paratyphi B Genome Sequencing Project"/>
            <person name="McClelland M."/>
            <person name="Sanderson E.K."/>
            <person name="Porwollik S."/>
            <person name="Spieth J."/>
            <person name="Clifton W.S."/>
            <person name="Fulton R."/>
            <person name="Cordes M."/>
            <person name="Wollam A."/>
            <person name="Shah N."/>
            <person name="Pepin K."/>
            <person name="Bhonagiri V."/>
            <person name="Nash W."/>
            <person name="Johnson M."/>
            <person name="Thiruvilangam P."/>
            <person name="Wilson R."/>
        </authorList>
    </citation>
    <scope>NUCLEOTIDE SEQUENCE [LARGE SCALE GENOMIC DNA]</scope>
    <source>
        <strain>ATCC BAA-1250 / SPB7</strain>
    </source>
</reference>